<accession>P0C137</accession>
<accession>P06823</accession>
<protein>
    <recommendedName>
        <fullName>Nuclear export protein</fullName>
        <shortName>NEP</shortName>
    </recommendedName>
    <alternativeName>
        <fullName>Non-structural protein 2</fullName>
        <shortName>NS2</shortName>
    </alternativeName>
</protein>
<proteinExistence type="inferred from homology"/>
<sequence length="177" mass="20234">VKSTNLMAFVATKMLERQEDLDTCTEMQVEKMKTSTKARLRTESSFAPRTWEDAIKDEILRRSVDTSSLDKWPELKQELENVSDALKADSLWLPMKSLSLYSKVSNQEPSSIPIGEMKHQILTRLKLICSRLEKLDLNLSKAVLGIQNSEDLILIIYNRDVCKNTILMIKSLCNSLI</sequence>
<comment type="function">
    <text evidence="1">Mediates the nuclear export of encapsidated genomic RNAs (ribonucleoproteins, RNPs). Acts as an adapter between viral RNPs complexes and the nuclear export machinery of the cell. Possesses no intrinsic RNA-binding activity, but includes a C-terminal M1-binding domain. This domain is believed to allow recognition of RNPs to which the M1 protein is bound. Because the M1 protein is not available in large quantities until the later stages of infection, such an indirect recognition mechanism probably ensures that genomic RNPs are not exported from the nucleus before sufficient quantities of viral mRNA and progeny genomic RNA have been synthesized. Furthermore, the RNPs enters the cytoplasm only when they have associated with the M1 protein that is necessary to guide them to the plasma membrane. May down-regulate viral RNA synthesis when overproduced (By similarity).</text>
</comment>
<comment type="subunit">
    <text evidence="1">Binds M1 protein. May interact with human nucleoporins and exportin XPO1/CRM1 (By similarity).</text>
</comment>
<comment type="subcellular location">
    <subcellularLocation>
        <location evidence="2">Virion</location>
    </subcellularLocation>
    <subcellularLocation>
        <location evidence="1">Host nucleus</location>
    </subcellularLocation>
</comment>
<comment type="alternative products">
    <event type="alternative splicing"/>
    <isoform>
        <id>P0C137-1</id>
        <name>NEP</name>
        <name>NS2</name>
        <sequence type="displayed"/>
    </isoform>
    <isoform>
        <id>P0C136-1</id>
        <name>NS1</name>
        <sequence type="external"/>
    </isoform>
</comment>
<comment type="sequence caution" evidence="2">
    <conflict type="frameshift">
        <sequence resource="EMBL-CDS" id="BAA24039"/>
    </conflict>
</comment>
<organismHost>
    <name type="scientific">Homo sapiens</name>
    <name type="common">Human</name>
    <dbReference type="NCBI Taxonomy" id="9606"/>
</organismHost>
<organismHost>
    <name type="scientific">Sus scrofa</name>
    <name type="common">Pig</name>
    <dbReference type="NCBI Taxonomy" id="9823"/>
</organismHost>
<feature type="chain" id="PRO_0000223678" description="Nuclear export protein">
    <location>
        <begin position="1"/>
        <end position="177"/>
    </location>
</feature>
<feature type="short sequence motif" description="Nuclear export signal" evidence="1">
    <location>
        <begin position="91"/>
        <end position="100"/>
    </location>
</feature>
<feature type="short sequence motif" description="Nuclear export signal" evidence="1">
    <location>
        <begin position="117"/>
        <end position="127"/>
    </location>
</feature>
<feature type="non-terminal residue">
    <location>
        <position position="1"/>
    </location>
</feature>
<evidence type="ECO:0000250" key="1"/>
<evidence type="ECO:0000305" key="2"/>
<organism>
    <name type="scientific">Influenza C virus (strain C/Johannesburg/1/1966)</name>
    <dbReference type="NCBI Taxonomy" id="100673"/>
    <lineage>
        <taxon>Viruses</taxon>
        <taxon>Riboviria</taxon>
        <taxon>Orthornavirae</taxon>
        <taxon>Negarnaviricota</taxon>
        <taxon>Polyploviricotina</taxon>
        <taxon>Insthoviricetes</taxon>
        <taxon>Articulavirales</taxon>
        <taxon>Orthomyxoviridae</taxon>
        <taxon>Gammainfluenzavirus</taxon>
        <taxon>Gammainfluenzavirus influenzae</taxon>
        <taxon>Influenza C virus</taxon>
    </lineage>
</organism>
<keyword id="KW-0025">Alternative splicing</keyword>
<keyword id="KW-1048">Host nucleus</keyword>
<keyword id="KW-0945">Host-virus interaction</keyword>
<keyword id="KW-0813">Transport</keyword>
<keyword id="KW-0946">Virion</keyword>
<gene>
    <name type="primary">NS</name>
</gene>
<name>NEP_INCJH</name>
<dbReference type="EMBL" id="D00031">
    <property type="protein sequence ID" value="BAA24039.1"/>
    <property type="status" value="ALT_FRAME"/>
    <property type="molecule type" value="Genomic_RNA"/>
</dbReference>
<dbReference type="SMR" id="P0C137"/>
<dbReference type="GO" id="GO:0042025">
    <property type="term" value="C:host cell nucleus"/>
    <property type="evidence" value="ECO:0007669"/>
    <property type="project" value="UniProtKB-SubCell"/>
</dbReference>
<dbReference type="GO" id="GO:0044423">
    <property type="term" value="C:virion component"/>
    <property type="evidence" value="ECO:0007669"/>
    <property type="project" value="UniProtKB-KW"/>
</dbReference>
<dbReference type="InterPro" id="IPR005188">
    <property type="entry name" value="Flu_C_NS2"/>
</dbReference>
<dbReference type="Pfam" id="PF03555">
    <property type="entry name" value="Flu_C_NS2"/>
    <property type="match status" value="1"/>
</dbReference>
<reference key="1">
    <citation type="journal article" date="1986" name="Virology">
        <title>Epidemiology of influenza C virus in man: multiple evolutionary lineages and low rate of change.</title>
        <authorList>
            <person name="Buonagurio D.A."/>
            <person name="Nakada S."/>
            <person name="Fitch W.M."/>
            <person name="Palese P."/>
        </authorList>
    </citation>
    <scope>NUCLEOTIDE SEQUENCE [GENOMIC RNA]</scope>
</reference>